<accession>Q0T4E0</accession>
<comment type="function">
    <text evidence="1">Catalyzes the attachment of tyrosine to tRNA(Tyr) in a two-step reaction: tyrosine is first activated by ATP to form Tyr-AMP and then transferred to the acceptor end of tRNA(Tyr).</text>
</comment>
<comment type="catalytic activity">
    <reaction evidence="1">
        <text>tRNA(Tyr) + L-tyrosine + ATP = L-tyrosyl-tRNA(Tyr) + AMP + diphosphate + H(+)</text>
        <dbReference type="Rhea" id="RHEA:10220"/>
        <dbReference type="Rhea" id="RHEA-COMP:9706"/>
        <dbReference type="Rhea" id="RHEA-COMP:9707"/>
        <dbReference type="ChEBI" id="CHEBI:15378"/>
        <dbReference type="ChEBI" id="CHEBI:30616"/>
        <dbReference type="ChEBI" id="CHEBI:33019"/>
        <dbReference type="ChEBI" id="CHEBI:58315"/>
        <dbReference type="ChEBI" id="CHEBI:78442"/>
        <dbReference type="ChEBI" id="CHEBI:78536"/>
        <dbReference type="ChEBI" id="CHEBI:456215"/>
        <dbReference type="EC" id="6.1.1.1"/>
    </reaction>
</comment>
<comment type="subunit">
    <text evidence="1">Homodimer.</text>
</comment>
<comment type="subcellular location">
    <subcellularLocation>
        <location evidence="1">Cytoplasm</location>
    </subcellularLocation>
</comment>
<comment type="similarity">
    <text evidence="1">Belongs to the class-I aminoacyl-tRNA synthetase family. TyrS type 1 subfamily.</text>
</comment>
<feature type="chain" id="PRO_1000088624" description="Tyrosine--tRNA ligase">
    <location>
        <begin position="1"/>
        <end position="424"/>
    </location>
</feature>
<feature type="domain" description="S4 RNA-binding" evidence="1">
    <location>
        <begin position="357"/>
        <end position="414"/>
    </location>
</feature>
<feature type="short sequence motif" description="'HIGH' region">
    <location>
        <begin position="42"/>
        <end position="51"/>
    </location>
</feature>
<feature type="short sequence motif" description="'KMSKS' region">
    <location>
        <begin position="235"/>
        <end position="239"/>
    </location>
</feature>
<feature type="binding site" evidence="1">
    <location>
        <position position="37"/>
    </location>
    <ligand>
        <name>L-tyrosine</name>
        <dbReference type="ChEBI" id="CHEBI:58315"/>
    </ligand>
</feature>
<feature type="binding site" evidence="1">
    <location>
        <position position="175"/>
    </location>
    <ligand>
        <name>L-tyrosine</name>
        <dbReference type="ChEBI" id="CHEBI:58315"/>
    </ligand>
</feature>
<feature type="binding site" evidence="1">
    <location>
        <position position="179"/>
    </location>
    <ligand>
        <name>L-tyrosine</name>
        <dbReference type="ChEBI" id="CHEBI:58315"/>
    </ligand>
</feature>
<feature type="binding site" evidence="1">
    <location>
        <position position="238"/>
    </location>
    <ligand>
        <name>ATP</name>
        <dbReference type="ChEBI" id="CHEBI:30616"/>
    </ligand>
</feature>
<feature type="modified residue" description="N6-acetyllysine" evidence="1">
    <location>
        <position position="144"/>
    </location>
</feature>
<keyword id="KW-0007">Acetylation</keyword>
<keyword id="KW-0030">Aminoacyl-tRNA synthetase</keyword>
<keyword id="KW-0067">ATP-binding</keyword>
<keyword id="KW-0963">Cytoplasm</keyword>
<keyword id="KW-0436">Ligase</keyword>
<keyword id="KW-0547">Nucleotide-binding</keyword>
<keyword id="KW-0648">Protein biosynthesis</keyword>
<keyword id="KW-0694">RNA-binding</keyword>
<proteinExistence type="inferred from homology"/>
<evidence type="ECO:0000255" key="1">
    <source>
        <dbReference type="HAMAP-Rule" id="MF_02006"/>
    </source>
</evidence>
<dbReference type="EC" id="6.1.1.1" evidence="1"/>
<dbReference type="EMBL" id="CP000266">
    <property type="protein sequence ID" value="ABF03825.1"/>
    <property type="molecule type" value="Genomic_DNA"/>
</dbReference>
<dbReference type="RefSeq" id="WP_011069386.1">
    <property type="nucleotide sequence ID" value="NC_008258.1"/>
</dbReference>
<dbReference type="SMR" id="Q0T4E0"/>
<dbReference type="KEGG" id="sfv:SFV_1654"/>
<dbReference type="HOGENOM" id="CLU_024003_0_3_6"/>
<dbReference type="Proteomes" id="UP000000659">
    <property type="component" value="Chromosome"/>
</dbReference>
<dbReference type="GO" id="GO:0005829">
    <property type="term" value="C:cytosol"/>
    <property type="evidence" value="ECO:0007669"/>
    <property type="project" value="TreeGrafter"/>
</dbReference>
<dbReference type="GO" id="GO:0005524">
    <property type="term" value="F:ATP binding"/>
    <property type="evidence" value="ECO:0007669"/>
    <property type="project" value="UniProtKB-UniRule"/>
</dbReference>
<dbReference type="GO" id="GO:0003723">
    <property type="term" value="F:RNA binding"/>
    <property type="evidence" value="ECO:0007669"/>
    <property type="project" value="UniProtKB-KW"/>
</dbReference>
<dbReference type="GO" id="GO:0004831">
    <property type="term" value="F:tyrosine-tRNA ligase activity"/>
    <property type="evidence" value="ECO:0007669"/>
    <property type="project" value="UniProtKB-UniRule"/>
</dbReference>
<dbReference type="GO" id="GO:0006437">
    <property type="term" value="P:tyrosyl-tRNA aminoacylation"/>
    <property type="evidence" value="ECO:0007669"/>
    <property type="project" value="UniProtKB-UniRule"/>
</dbReference>
<dbReference type="CDD" id="cd00165">
    <property type="entry name" value="S4"/>
    <property type="match status" value="1"/>
</dbReference>
<dbReference type="CDD" id="cd00805">
    <property type="entry name" value="TyrRS_core"/>
    <property type="match status" value="1"/>
</dbReference>
<dbReference type="FunFam" id="1.10.240.10:FF:000001">
    <property type="entry name" value="Tyrosine--tRNA ligase"/>
    <property type="match status" value="1"/>
</dbReference>
<dbReference type="FunFam" id="3.10.290.10:FF:000007">
    <property type="entry name" value="Tyrosine--tRNA ligase"/>
    <property type="match status" value="1"/>
</dbReference>
<dbReference type="FunFam" id="3.40.50.620:FF:000008">
    <property type="entry name" value="Tyrosine--tRNA ligase"/>
    <property type="match status" value="1"/>
</dbReference>
<dbReference type="Gene3D" id="3.40.50.620">
    <property type="entry name" value="HUPs"/>
    <property type="match status" value="1"/>
</dbReference>
<dbReference type="Gene3D" id="3.10.290.10">
    <property type="entry name" value="RNA-binding S4 domain"/>
    <property type="match status" value="1"/>
</dbReference>
<dbReference type="Gene3D" id="1.10.240.10">
    <property type="entry name" value="Tyrosyl-Transfer RNA Synthetase"/>
    <property type="match status" value="1"/>
</dbReference>
<dbReference type="HAMAP" id="MF_02006">
    <property type="entry name" value="Tyr_tRNA_synth_type1"/>
    <property type="match status" value="1"/>
</dbReference>
<dbReference type="InterPro" id="IPR001412">
    <property type="entry name" value="aa-tRNA-synth_I_CS"/>
</dbReference>
<dbReference type="InterPro" id="IPR002305">
    <property type="entry name" value="aa-tRNA-synth_Ic"/>
</dbReference>
<dbReference type="InterPro" id="IPR014729">
    <property type="entry name" value="Rossmann-like_a/b/a_fold"/>
</dbReference>
<dbReference type="InterPro" id="IPR002942">
    <property type="entry name" value="S4_RNA-bd"/>
</dbReference>
<dbReference type="InterPro" id="IPR036986">
    <property type="entry name" value="S4_RNA-bd_sf"/>
</dbReference>
<dbReference type="InterPro" id="IPR054608">
    <property type="entry name" value="SYY-like_C"/>
</dbReference>
<dbReference type="InterPro" id="IPR002307">
    <property type="entry name" value="Tyr-tRNA-ligase"/>
</dbReference>
<dbReference type="InterPro" id="IPR024088">
    <property type="entry name" value="Tyr-tRNA-ligase_bac-type"/>
</dbReference>
<dbReference type="InterPro" id="IPR024107">
    <property type="entry name" value="Tyr-tRNA-ligase_bac_1"/>
</dbReference>
<dbReference type="NCBIfam" id="TIGR00234">
    <property type="entry name" value="tyrS"/>
    <property type="match status" value="1"/>
</dbReference>
<dbReference type="PANTHER" id="PTHR11766:SF0">
    <property type="entry name" value="TYROSINE--TRNA LIGASE, MITOCHONDRIAL"/>
    <property type="match status" value="1"/>
</dbReference>
<dbReference type="PANTHER" id="PTHR11766">
    <property type="entry name" value="TYROSYL-TRNA SYNTHETASE"/>
    <property type="match status" value="1"/>
</dbReference>
<dbReference type="Pfam" id="PF22421">
    <property type="entry name" value="SYY_C-terminal"/>
    <property type="match status" value="1"/>
</dbReference>
<dbReference type="Pfam" id="PF00579">
    <property type="entry name" value="tRNA-synt_1b"/>
    <property type="match status" value="1"/>
</dbReference>
<dbReference type="PRINTS" id="PR01040">
    <property type="entry name" value="TRNASYNTHTYR"/>
</dbReference>
<dbReference type="SMART" id="SM00363">
    <property type="entry name" value="S4"/>
    <property type="match status" value="1"/>
</dbReference>
<dbReference type="SUPFAM" id="SSF55174">
    <property type="entry name" value="Alpha-L RNA-binding motif"/>
    <property type="match status" value="1"/>
</dbReference>
<dbReference type="SUPFAM" id="SSF52374">
    <property type="entry name" value="Nucleotidylyl transferase"/>
    <property type="match status" value="1"/>
</dbReference>
<dbReference type="PROSITE" id="PS00178">
    <property type="entry name" value="AA_TRNA_LIGASE_I"/>
    <property type="match status" value="1"/>
</dbReference>
<dbReference type="PROSITE" id="PS50889">
    <property type="entry name" value="S4"/>
    <property type="match status" value="1"/>
</dbReference>
<reference key="1">
    <citation type="journal article" date="2006" name="BMC Genomics">
        <title>Complete genome sequence of Shigella flexneri 5b and comparison with Shigella flexneri 2a.</title>
        <authorList>
            <person name="Nie H."/>
            <person name="Yang F."/>
            <person name="Zhang X."/>
            <person name="Yang J."/>
            <person name="Chen L."/>
            <person name="Wang J."/>
            <person name="Xiong Z."/>
            <person name="Peng J."/>
            <person name="Sun L."/>
            <person name="Dong J."/>
            <person name="Xue Y."/>
            <person name="Xu X."/>
            <person name="Chen S."/>
            <person name="Yao Z."/>
            <person name="Shen Y."/>
            <person name="Jin Q."/>
        </authorList>
    </citation>
    <scope>NUCLEOTIDE SEQUENCE [LARGE SCALE GENOMIC DNA]</scope>
    <source>
        <strain>8401</strain>
    </source>
</reference>
<sequence length="424" mass="47844">MASSNLIKQLQERGLVAQVTDEEALAERLAQGPIALYCGFDPTADSLHLGHLVPLLCLKRFQQAGHKPVALVGGATGLIGDPSFKAAERKLNTEETVQEWVDKIRKQVAPFLDFDCGENSAIAANNYDWFGNMNVLTFLRDIGKHFSVNQMINKEAVKQRLNREDEGMSITEFSYNLQQGYDWTCLNTHYYVELQIGGSDQRWNITSEIDLTRRLHQNHVLGLPDPLITNGDGTKFGKTEGGAVWLDPKKTSPYKFYQFWINTADADVYRFLKFFTFMSIEEINALEEEDKNSGKAPRAQYVLAEQVTRLVHGEEGLQAAKRITECLFSGSLSALSEADFEQLAQDGVPMVEMEKGADLMQALVDSELQPSRGQARKTIASNAITINGEKQSDPEYFFKEEDRLFGRFTLLRRGKKNYCLICWK</sequence>
<gene>
    <name evidence="1" type="primary">tyrS</name>
    <name type="ordered locus">SFV_1654</name>
</gene>
<name>SYY_SHIF8</name>
<protein>
    <recommendedName>
        <fullName evidence="1">Tyrosine--tRNA ligase</fullName>
        <ecNumber evidence="1">6.1.1.1</ecNumber>
    </recommendedName>
    <alternativeName>
        <fullName evidence="1">Tyrosyl-tRNA synthetase</fullName>
        <shortName evidence="1">TyrRS</shortName>
    </alternativeName>
</protein>
<organism>
    <name type="scientific">Shigella flexneri serotype 5b (strain 8401)</name>
    <dbReference type="NCBI Taxonomy" id="373384"/>
    <lineage>
        <taxon>Bacteria</taxon>
        <taxon>Pseudomonadati</taxon>
        <taxon>Pseudomonadota</taxon>
        <taxon>Gammaproteobacteria</taxon>
        <taxon>Enterobacterales</taxon>
        <taxon>Enterobacteriaceae</taxon>
        <taxon>Shigella</taxon>
    </lineage>
</organism>